<keyword id="KW-0028">Amino-acid biosynthesis</keyword>
<keyword id="KW-0378">Hydrolase</keyword>
<keyword id="KW-0486">Methionine biosynthesis</keyword>
<evidence type="ECO:0000255" key="1">
    <source>
        <dbReference type="HAMAP-Rule" id="MF_01684"/>
    </source>
</evidence>
<sequence>MKVGIIGAMEEEVNLLRNELTERVDTEIANYHFYEGYLGNMQVVILKSGIGKVNAAIGTTLLIDKFKPDVVINTGSAGGFKKGMKVGDVVVSTEVRHHDVDVTAFGYEYGQVPGMPPAYEADAKLVSVCKDVIENLPDVNVHQGLIVTGDSFINDSKRVADILGHFDGVAAVEMEAAPIAQTCYQFGVPFVVTRSISDSADEEANLSFDEFLETASINSAKMVMAVTKRLEQA</sequence>
<protein>
    <recommendedName>
        <fullName evidence="1">5'-methylthioadenosine/S-adenosylhomocysteine nucleosidase</fullName>
        <shortName evidence="1">MTA/SAH nucleosidase</shortName>
        <shortName evidence="1">MTAN</shortName>
        <ecNumber evidence="1">3.2.2.9</ecNumber>
    </recommendedName>
    <alternativeName>
        <fullName evidence="1">5'-deoxyadenosine nucleosidase</fullName>
        <shortName evidence="1">DOA nucleosidase</shortName>
        <shortName evidence="1">dAdo nucleosidase</shortName>
    </alternativeName>
    <alternativeName>
        <fullName evidence="1">5'-methylthioadenosine nucleosidase</fullName>
        <shortName evidence="1">MTA nucleosidase</shortName>
    </alternativeName>
    <alternativeName>
        <fullName evidence="1">S-adenosylhomocysteine nucleosidase</fullName>
        <shortName evidence="1">AdoHcy nucleosidase</shortName>
        <shortName evidence="1">SAH nucleosidase</shortName>
        <shortName evidence="1">SRH nucleosidase</shortName>
    </alternativeName>
</protein>
<feature type="chain" id="PRO_1000215911" description="5'-methylthioadenosine/S-adenosylhomocysteine nucleosidase">
    <location>
        <begin position="1"/>
        <end position="233"/>
    </location>
</feature>
<feature type="active site" description="Proton acceptor" evidence="1">
    <location>
        <position position="12"/>
    </location>
</feature>
<feature type="active site" description="Proton donor" evidence="1">
    <location>
        <position position="198"/>
    </location>
</feature>
<feature type="binding site" evidence="1">
    <location>
        <position position="78"/>
    </location>
    <ligand>
        <name>substrate</name>
    </ligand>
</feature>
<feature type="binding site" evidence="1">
    <location>
        <position position="153"/>
    </location>
    <ligand>
        <name>substrate</name>
    </ligand>
</feature>
<feature type="binding site" evidence="1">
    <location>
        <begin position="174"/>
        <end position="175"/>
    </location>
    <ligand>
        <name>substrate</name>
    </ligand>
</feature>
<organism>
    <name type="scientific">Exiguobacterium sp. (strain ATCC BAA-1283 / AT1b)</name>
    <dbReference type="NCBI Taxonomy" id="360911"/>
    <lineage>
        <taxon>Bacteria</taxon>
        <taxon>Bacillati</taxon>
        <taxon>Bacillota</taxon>
        <taxon>Bacilli</taxon>
        <taxon>Bacillales</taxon>
        <taxon>Bacillales Family XII. Incertae Sedis</taxon>
        <taxon>Exiguobacterium</taxon>
    </lineage>
</organism>
<gene>
    <name evidence="1" type="primary">mtnN</name>
    <name type="ordered locus">EAT1b_2730</name>
</gene>
<comment type="function">
    <text evidence="1">Catalyzes the irreversible cleavage of the glycosidic bond in both 5'-methylthioadenosine (MTA) and S-adenosylhomocysteine (SAH/AdoHcy) to adenine and the corresponding thioribose, 5'-methylthioribose and S-ribosylhomocysteine, respectively. Also cleaves 5'-deoxyadenosine, a toxic by-product of radical S-adenosylmethionine (SAM) enzymes, into 5-deoxyribose and adenine.</text>
</comment>
<comment type="catalytic activity">
    <reaction evidence="1">
        <text>S-adenosyl-L-homocysteine + H2O = S-(5-deoxy-D-ribos-5-yl)-L-homocysteine + adenine</text>
        <dbReference type="Rhea" id="RHEA:17805"/>
        <dbReference type="ChEBI" id="CHEBI:15377"/>
        <dbReference type="ChEBI" id="CHEBI:16708"/>
        <dbReference type="ChEBI" id="CHEBI:57856"/>
        <dbReference type="ChEBI" id="CHEBI:58195"/>
        <dbReference type="EC" id="3.2.2.9"/>
    </reaction>
</comment>
<comment type="catalytic activity">
    <reaction evidence="1">
        <text>S-methyl-5'-thioadenosine + H2O = 5-(methylsulfanyl)-D-ribose + adenine</text>
        <dbReference type="Rhea" id="RHEA:13617"/>
        <dbReference type="ChEBI" id="CHEBI:15377"/>
        <dbReference type="ChEBI" id="CHEBI:16708"/>
        <dbReference type="ChEBI" id="CHEBI:17509"/>
        <dbReference type="ChEBI" id="CHEBI:78440"/>
        <dbReference type="EC" id="3.2.2.9"/>
    </reaction>
</comment>
<comment type="catalytic activity">
    <reaction evidence="1">
        <text>5'-deoxyadenosine + H2O = 5-deoxy-D-ribose + adenine</text>
        <dbReference type="Rhea" id="RHEA:29859"/>
        <dbReference type="ChEBI" id="CHEBI:15377"/>
        <dbReference type="ChEBI" id="CHEBI:16708"/>
        <dbReference type="ChEBI" id="CHEBI:17319"/>
        <dbReference type="ChEBI" id="CHEBI:149540"/>
        <dbReference type="EC" id="3.2.2.9"/>
    </reaction>
    <physiologicalReaction direction="left-to-right" evidence="1">
        <dbReference type="Rhea" id="RHEA:29860"/>
    </physiologicalReaction>
</comment>
<comment type="pathway">
    <text evidence="1">Amino-acid biosynthesis; L-methionine biosynthesis via salvage pathway; S-methyl-5-thio-alpha-D-ribose 1-phosphate from S-methyl-5'-thioadenosine (hydrolase route): step 1/2.</text>
</comment>
<comment type="similarity">
    <text evidence="1">Belongs to the PNP/UDP phosphorylase family. MtnN subfamily.</text>
</comment>
<name>MTNN_EXISA</name>
<dbReference type="EC" id="3.2.2.9" evidence="1"/>
<dbReference type="EMBL" id="CP001615">
    <property type="protein sequence ID" value="ACQ71644.1"/>
    <property type="molecule type" value="Genomic_DNA"/>
</dbReference>
<dbReference type="RefSeq" id="WP_015881203.1">
    <property type="nucleotide sequence ID" value="NC_012673.1"/>
</dbReference>
<dbReference type="SMR" id="C4L559"/>
<dbReference type="STRING" id="360911.EAT1b_2730"/>
<dbReference type="GeneID" id="94372607"/>
<dbReference type="KEGG" id="eat:EAT1b_2730"/>
<dbReference type="eggNOG" id="COG0775">
    <property type="taxonomic scope" value="Bacteria"/>
</dbReference>
<dbReference type="HOGENOM" id="CLU_031248_2_2_9"/>
<dbReference type="OrthoDB" id="9792278at2"/>
<dbReference type="UniPathway" id="UPA00904">
    <property type="reaction ID" value="UER00871"/>
</dbReference>
<dbReference type="Proteomes" id="UP000000716">
    <property type="component" value="Chromosome"/>
</dbReference>
<dbReference type="GO" id="GO:0005829">
    <property type="term" value="C:cytosol"/>
    <property type="evidence" value="ECO:0007669"/>
    <property type="project" value="TreeGrafter"/>
</dbReference>
<dbReference type="GO" id="GO:0008782">
    <property type="term" value="F:adenosylhomocysteine nucleosidase activity"/>
    <property type="evidence" value="ECO:0007669"/>
    <property type="project" value="UniProtKB-UniRule"/>
</dbReference>
<dbReference type="GO" id="GO:0008930">
    <property type="term" value="F:methylthioadenosine nucleosidase activity"/>
    <property type="evidence" value="ECO:0007669"/>
    <property type="project" value="UniProtKB-UniRule"/>
</dbReference>
<dbReference type="GO" id="GO:0019509">
    <property type="term" value="P:L-methionine salvage from methylthioadenosine"/>
    <property type="evidence" value="ECO:0007669"/>
    <property type="project" value="UniProtKB-UniRule"/>
</dbReference>
<dbReference type="GO" id="GO:0019284">
    <property type="term" value="P:L-methionine salvage from S-adenosylmethionine"/>
    <property type="evidence" value="ECO:0007669"/>
    <property type="project" value="TreeGrafter"/>
</dbReference>
<dbReference type="GO" id="GO:0009164">
    <property type="term" value="P:nucleoside catabolic process"/>
    <property type="evidence" value="ECO:0007669"/>
    <property type="project" value="InterPro"/>
</dbReference>
<dbReference type="CDD" id="cd09008">
    <property type="entry name" value="MTAN"/>
    <property type="match status" value="1"/>
</dbReference>
<dbReference type="FunFam" id="3.40.50.1580:FF:000001">
    <property type="entry name" value="MTA/SAH nucleosidase family protein"/>
    <property type="match status" value="1"/>
</dbReference>
<dbReference type="Gene3D" id="3.40.50.1580">
    <property type="entry name" value="Nucleoside phosphorylase domain"/>
    <property type="match status" value="1"/>
</dbReference>
<dbReference type="HAMAP" id="MF_01684">
    <property type="entry name" value="Salvage_MtnN"/>
    <property type="match status" value="1"/>
</dbReference>
<dbReference type="InterPro" id="IPR010049">
    <property type="entry name" value="MTA_SAH_Nsdase"/>
</dbReference>
<dbReference type="InterPro" id="IPR000845">
    <property type="entry name" value="Nucleoside_phosphorylase_d"/>
</dbReference>
<dbReference type="InterPro" id="IPR035994">
    <property type="entry name" value="Nucleoside_phosphorylase_sf"/>
</dbReference>
<dbReference type="NCBIfam" id="TIGR01704">
    <property type="entry name" value="MTA_SAH-Nsdase"/>
    <property type="match status" value="1"/>
</dbReference>
<dbReference type="NCBIfam" id="NF004079">
    <property type="entry name" value="PRK05584.1"/>
    <property type="match status" value="1"/>
</dbReference>
<dbReference type="PANTHER" id="PTHR46832">
    <property type="entry name" value="5'-METHYLTHIOADENOSINE/S-ADENOSYLHOMOCYSTEINE NUCLEOSIDASE"/>
    <property type="match status" value="1"/>
</dbReference>
<dbReference type="PANTHER" id="PTHR46832:SF1">
    <property type="entry name" value="5'-METHYLTHIOADENOSINE_S-ADENOSYLHOMOCYSTEINE NUCLEOSIDASE"/>
    <property type="match status" value="1"/>
</dbReference>
<dbReference type="Pfam" id="PF01048">
    <property type="entry name" value="PNP_UDP_1"/>
    <property type="match status" value="1"/>
</dbReference>
<dbReference type="SUPFAM" id="SSF53167">
    <property type="entry name" value="Purine and uridine phosphorylases"/>
    <property type="match status" value="1"/>
</dbReference>
<reference key="1">
    <citation type="journal article" date="2011" name="J. Bacteriol.">
        <title>Complete genome sequence of the Thermophilic Bacterium Exiguobacterium sp. AT1b.</title>
        <authorList>
            <person name="Vishnivetskaya T.A."/>
            <person name="Lucas S."/>
            <person name="Copeland A."/>
            <person name="Lapidus A."/>
            <person name="Glavina del Rio T."/>
            <person name="Dalin E."/>
            <person name="Tice H."/>
            <person name="Bruce D.C."/>
            <person name="Goodwin L.A."/>
            <person name="Pitluck S."/>
            <person name="Saunders E."/>
            <person name="Brettin T."/>
            <person name="Detter C."/>
            <person name="Han C."/>
            <person name="Larimer F."/>
            <person name="Land M.L."/>
            <person name="Hauser L.J."/>
            <person name="Kyrpides N.C."/>
            <person name="Ovchinnikova G."/>
            <person name="Kathariou S."/>
            <person name="Ramaley R.F."/>
            <person name="Rodrigues D.F."/>
            <person name="Hendrix C."/>
            <person name="Richardson P."/>
            <person name="Tiedje J.M."/>
        </authorList>
    </citation>
    <scope>NUCLEOTIDE SEQUENCE [LARGE SCALE GENOMIC DNA]</scope>
    <source>
        <strain>ATCC BAA-1283 / AT1b</strain>
    </source>
</reference>
<accession>C4L559</accession>
<proteinExistence type="inferred from homology"/>